<accession>O26883</accession>
<evidence type="ECO:0000255" key="1">
    <source>
        <dbReference type="HAMAP-Rule" id="MF_01409"/>
    </source>
</evidence>
<evidence type="ECO:0000305" key="2"/>
<proteinExistence type="inferred from homology"/>
<name>HMGCS_METTH</name>
<feature type="chain" id="PRO_0000057618" description="Hydroxymethylglutaryl-CoA synthase">
    <location>
        <begin position="1"/>
        <end position="346"/>
    </location>
</feature>
<feature type="active site" description="Proton donor/acceptor" evidence="1">
    <location>
        <position position="80"/>
    </location>
</feature>
<feature type="active site" description="Acyl-thioester intermediate" evidence="1">
    <location>
        <position position="112"/>
    </location>
</feature>
<feature type="active site" description="Proton donor/acceptor" evidence="1">
    <location>
        <position position="234"/>
    </location>
</feature>
<feature type="binding site" evidence="1">
    <location>
        <position position="28"/>
    </location>
    <ligand>
        <name>(3S)-3-hydroxy-3-methylglutaryl-CoA</name>
        <dbReference type="ChEBI" id="CHEBI:43074"/>
    </ligand>
</feature>
<feature type="binding site" evidence="1">
    <location>
        <position position="112"/>
    </location>
    <ligand>
        <name>(3S)-3-hydroxy-3-methylglutaryl-CoA</name>
        <dbReference type="ChEBI" id="CHEBI:43074"/>
    </ligand>
</feature>
<feature type="binding site" evidence="1">
    <location>
        <position position="153"/>
    </location>
    <ligand>
        <name>(3S)-3-hydroxy-3-methylglutaryl-CoA</name>
        <dbReference type="ChEBI" id="CHEBI:43074"/>
    </ligand>
</feature>
<feature type="binding site" evidence="1">
    <location>
        <position position="199"/>
    </location>
    <ligand>
        <name>CoA</name>
        <dbReference type="ChEBI" id="CHEBI:57287"/>
        <note>ligand shared with acetoacetyl-CoA thiolase</note>
    </ligand>
</feature>
<feature type="binding site" evidence="1">
    <location>
        <position position="201"/>
    </location>
    <ligand>
        <name>(3S)-3-hydroxy-3-methylglutaryl-CoA</name>
        <dbReference type="ChEBI" id="CHEBI:43074"/>
    </ligand>
</feature>
<feature type="binding site" evidence="1">
    <location>
        <position position="234"/>
    </location>
    <ligand>
        <name>(3S)-3-hydroxy-3-methylglutaryl-CoA</name>
        <dbReference type="ChEBI" id="CHEBI:43074"/>
    </ligand>
</feature>
<feature type="binding site" evidence="1">
    <location>
        <position position="239"/>
    </location>
    <ligand>
        <name>CoA</name>
        <dbReference type="ChEBI" id="CHEBI:57287"/>
        <note>ligand shared with acetoacetyl-CoA thiolase</note>
    </ligand>
</feature>
<feature type="binding site" evidence="1">
    <location>
        <position position="243"/>
    </location>
    <ligand>
        <name>(3S)-3-hydroxy-3-methylglutaryl-CoA</name>
        <dbReference type="ChEBI" id="CHEBI:43074"/>
    </ligand>
</feature>
<feature type="binding site" evidence="1">
    <location>
        <position position="266"/>
    </location>
    <ligand>
        <name>(3S)-3-hydroxy-3-methylglutaryl-CoA</name>
        <dbReference type="ChEBI" id="CHEBI:43074"/>
    </ligand>
</feature>
<feature type="binding site" evidence="1">
    <location>
        <position position="296"/>
    </location>
    <ligand>
        <name>(3S)-3-hydroxy-3-methylglutaryl-CoA</name>
        <dbReference type="ChEBI" id="CHEBI:43074"/>
    </ligand>
</feature>
<reference key="1">
    <citation type="journal article" date="1997" name="J. Bacteriol.">
        <title>Complete genome sequence of Methanobacterium thermoautotrophicum deltaH: functional analysis and comparative genomics.</title>
        <authorList>
            <person name="Smith D.R."/>
            <person name="Doucette-Stamm L.A."/>
            <person name="Deloughery C."/>
            <person name="Lee H.-M."/>
            <person name="Dubois J."/>
            <person name="Aldredge T."/>
            <person name="Bashirzadeh R."/>
            <person name="Blakely D."/>
            <person name="Cook R."/>
            <person name="Gilbert K."/>
            <person name="Harrison D."/>
            <person name="Hoang L."/>
            <person name="Keagle P."/>
            <person name="Lumm W."/>
            <person name="Pothier B."/>
            <person name="Qiu D."/>
            <person name="Spadafora R."/>
            <person name="Vicare R."/>
            <person name="Wang Y."/>
            <person name="Wierzbowski J."/>
            <person name="Gibson R."/>
            <person name="Jiwani N."/>
            <person name="Caruso A."/>
            <person name="Bush D."/>
            <person name="Safer H."/>
            <person name="Patwell D."/>
            <person name="Prabhakar S."/>
            <person name="McDougall S."/>
            <person name="Shimer G."/>
            <person name="Goyal A."/>
            <person name="Pietrovski S."/>
            <person name="Church G.M."/>
            <person name="Daniels C.J."/>
            <person name="Mao J.-I."/>
            <person name="Rice P."/>
            <person name="Noelling J."/>
            <person name="Reeve J.N."/>
        </authorList>
    </citation>
    <scope>NUCLEOTIDE SEQUENCE [LARGE SCALE GENOMIC DNA]</scope>
    <source>
        <strain>ATCC 29096 / DSM 1053 / JCM 10044 / NBRC 100330 / Delta H</strain>
    </source>
</reference>
<organism>
    <name type="scientific">Methanothermobacter thermautotrophicus (strain ATCC 29096 / DSM 1053 / JCM 10044 / NBRC 100330 / Delta H)</name>
    <name type="common">Methanobacterium thermoautotrophicum</name>
    <dbReference type="NCBI Taxonomy" id="187420"/>
    <lineage>
        <taxon>Archaea</taxon>
        <taxon>Methanobacteriati</taxon>
        <taxon>Methanobacteriota</taxon>
        <taxon>Methanomada group</taxon>
        <taxon>Methanobacteria</taxon>
        <taxon>Methanobacteriales</taxon>
        <taxon>Methanobacteriaceae</taxon>
        <taxon>Methanothermobacter</taxon>
    </lineage>
</organism>
<dbReference type="EC" id="2.3.3.10" evidence="1"/>
<dbReference type="EMBL" id="AE000666">
    <property type="protein sequence ID" value="AAB85292.1"/>
    <property type="status" value="ALT_INIT"/>
    <property type="molecule type" value="Genomic_DNA"/>
</dbReference>
<dbReference type="PIR" id="F69205">
    <property type="entry name" value="F69205"/>
</dbReference>
<dbReference type="RefSeq" id="WP_048060900.1">
    <property type="nucleotide sequence ID" value="NC_000916.1"/>
</dbReference>
<dbReference type="SMR" id="O26883"/>
<dbReference type="FunCoup" id="O26883">
    <property type="interactions" value="72"/>
</dbReference>
<dbReference type="IntAct" id="O26883">
    <property type="interactions" value="1"/>
</dbReference>
<dbReference type="STRING" id="187420.MTH_792"/>
<dbReference type="PaxDb" id="187420-MTH_792"/>
<dbReference type="EnsemblBacteria" id="AAB85292">
    <property type="protein sequence ID" value="AAB85292"/>
    <property type="gene ID" value="MTH_792"/>
</dbReference>
<dbReference type="KEGG" id="mth:MTH_792"/>
<dbReference type="PATRIC" id="fig|187420.15.peg.777"/>
<dbReference type="HOGENOM" id="CLU_039592_7_0_2"/>
<dbReference type="InParanoid" id="O26883"/>
<dbReference type="UniPathway" id="UPA00058">
    <property type="reaction ID" value="UER00102"/>
</dbReference>
<dbReference type="Proteomes" id="UP000005223">
    <property type="component" value="Chromosome"/>
</dbReference>
<dbReference type="GO" id="GO:0003985">
    <property type="term" value="F:acetyl-CoA C-acetyltransferase activity"/>
    <property type="evidence" value="ECO:0007669"/>
    <property type="project" value="UniProtKB-UniRule"/>
</dbReference>
<dbReference type="GO" id="GO:0004421">
    <property type="term" value="F:hydroxymethylglutaryl-CoA synthase activity"/>
    <property type="evidence" value="ECO:0007669"/>
    <property type="project" value="InterPro"/>
</dbReference>
<dbReference type="GO" id="GO:0010142">
    <property type="term" value="P:farnesyl diphosphate biosynthetic process, mevalonate pathway"/>
    <property type="evidence" value="ECO:0007669"/>
    <property type="project" value="TreeGrafter"/>
</dbReference>
<dbReference type="GO" id="GO:0019287">
    <property type="term" value="P:isopentenyl diphosphate biosynthetic process, mevalonate pathway"/>
    <property type="evidence" value="ECO:0007669"/>
    <property type="project" value="UniProtKB-UniRule"/>
</dbReference>
<dbReference type="CDD" id="cd00827">
    <property type="entry name" value="init_cond_enzymes"/>
    <property type="match status" value="1"/>
</dbReference>
<dbReference type="FunFam" id="3.40.47.10:FF:000046">
    <property type="entry name" value="UPF0219 protein M1627_1703"/>
    <property type="match status" value="1"/>
</dbReference>
<dbReference type="Gene3D" id="3.40.47.10">
    <property type="match status" value="1"/>
</dbReference>
<dbReference type="HAMAP" id="MF_01409">
    <property type="entry name" value="HMG_CoA_synth_arch"/>
    <property type="match status" value="1"/>
</dbReference>
<dbReference type="InterPro" id="IPR013747">
    <property type="entry name" value="ACP_syn_III_C"/>
</dbReference>
<dbReference type="InterPro" id="IPR004656">
    <property type="entry name" value="HMG_CoA_Synthase"/>
</dbReference>
<dbReference type="InterPro" id="IPR016039">
    <property type="entry name" value="Thiolase-like"/>
</dbReference>
<dbReference type="NCBIfam" id="TIGR00748">
    <property type="entry name" value="HMG_CoA_syn_Arc"/>
    <property type="match status" value="1"/>
</dbReference>
<dbReference type="NCBIfam" id="NF003274">
    <property type="entry name" value="PRK04262.1"/>
    <property type="match status" value="1"/>
</dbReference>
<dbReference type="PANTHER" id="PTHR43323">
    <property type="entry name" value="3-HYDROXY-3-METHYLGLUTARYL COENZYME A SYNTHASE"/>
    <property type="match status" value="1"/>
</dbReference>
<dbReference type="PANTHER" id="PTHR43323:SF2">
    <property type="entry name" value="HYDROXYMETHYLGLUTARYL-COA SYNTHASE"/>
    <property type="match status" value="1"/>
</dbReference>
<dbReference type="Pfam" id="PF08541">
    <property type="entry name" value="ACP_syn_III_C"/>
    <property type="match status" value="1"/>
</dbReference>
<dbReference type="SUPFAM" id="SSF53901">
    <property type="entry name" value="Thiolase-like"/>
    <property type="match status" value="2"/>
</dbReference>
<comment type="function">
    <text evidence="1">Catalyzes the condensation of acetyl-CoA with acetoacetyl-CoA to form 3-hydroxy-3-methylglutaryl-CoA (HMG-CoA). Functions in the mevalonate (MVA) pathway leading to isopentenyl diphosphate (IPP), a key precursor for the biosynthesis of isoprenoid compounds that are building blocks of archaeal membrane lipids.</text>
</comment>
<comment type="catalytic activity">
    <reaction evidence="1">
        <text>acetoacetyl-CoA + acetyl-CoA + H2O = (3S)-3-hydroxy-3-methylglutaryl-CoA + CoA + H(+)</text>
        <dbReference type="Rhea" id="RHEA:10188"/>
        <dbReference type="ChEBI" id="CHEBI:15377"/>
        <dbReference type="ChEBI" id="CHEBI:15378"/>
        <dbReference type="ChEBI" id="CHEBI:43074"/>
        <dbReference type="ChEBI" id="CHEBI:57286"/>
        <dbReference type="ChEBI" id="CHEBI:57287"/>
        <dbReference type="ChEBI" id="CHEBI:57288"/>
        <dbReference type="EC" id="2.3.3.10"/>
    </reaction>
    <physiologicalReaction direction="left-to-right" evidence="1">
        <dbReference type="Rhea" id="RHEA:10189"/>
    </physiologicalReaction>
</comment>
<comment type="pathway">
    <text evidence="1">Metabolic intermediate biosynthesis; (R)-mevalonate biosynthesis; (R)-mevalonate from acetyl-CoA: step 2/3.</text>
</comment>
<comment type="subunit">
    <text evidence="1">Interacts with acetoacetyl-CoA thiolase that catalyzes the precedent step in the pathway and with a DUF35 protein. The acetoacetyl-CoA thiolase/HMG-CoA synthase complex channels the intermediate via a fused CoA-binding site, which allows for efficient coupling of the endergonic thiolase reaction with the exergonic HMGCS reaction.</text>
</comment>
<comment type="similarity">
    <text evidence="1">Belongs to the thiolase-like superfamily. Archaeal HMG-CoA synthase family.</text>
</comment>
<comment type="sequence caution" evidence="2">
    <conflict type="erroneous initiation">
        <sequence resource="EMBL-CDS" id="AAB85292"/>
    </conflict>
</comment>
<protein>
    <recommendedName>
        <fullName evidence="1">Hydroxymethylglutaryl-CoA synthase</fullName>
        <shortName evidence="1">HMG-CoA synthase</shortName>
        <shortName evidence="1">HMGCS</shortName>
        <ecNumber evidence="1">2.3.3.10</ecNumber>
    </recommendedName>
</protein>
<gene>
    <name type="ordered locus">MTH_792</name>
</gene>
<sequence length="346" mass="36718">MAGIVGYGVYIPSYRIKVEEIARVWGDDPQAISRGLVVEEKSVPGPDEDTATISVEAARNALRRSQIDPSEIGAVYVGSESHPYAVKPTATIVAEAVEATPEMTAADLEFACKAGTAGIQACMGLVDSGIIKYGLAVGADTAQGAPGDALEYTASAGGAAYVIGGKNCLADIKETYSFTTDTPDFYRREGMPYPRHGGRFTGEPAYFKHVLGAARGMMEKTGLSADDFDYAVFHQPNGKFYLKAARKLGFESEQVKPGLLTPVIGNTYSGATPVGLAATLDVAEPGARILAVSYGSGAGSDAFIIEVNDLIEERRDLAPSVAEIIKNKRYVDYALYAKFKGKLRMA</sequence>
<keyword id="KW-0012">Acyltransferase</keyword>
<keyword id="KW-0414">Isoprene biosynthesis</keyword>
<keyword id="KW-1185">Reference proteome</keyword>
<keyword id="KW-0808">Transferase</keyword>